<reference key="1">
    <citation type="journal article" date="2005" name="Science">
        <title>The transcriptional landscape of the mammalian genome.</title>
        <authorList>
            <person name="Carninci P."/>
            <person name="Kasukawa T."/>
            <person name="Katayama S."/>
            <person name="Gough J."/>
            <person name="Frith M.C."/>
            <person name="Maeda N."/>
            <person name="Oyama R."/>
            <person name="Ravasi T."/>
            <person name="Lenhard B."/>
            <person name="Wells C."/>
            <person name="Kodzius R."/>
            <person name="Shimokawa K."/>
            <person name="Bajic V.B."/>
            <person name="Brenner S.E."/>
            <person name="Batalov S."/>
            <person name="Forrest A.R."/>
            <person name="Zavolan M."/>
            <person name="Davis M.J."/>
            <person name="Wilming L.G."/>
            <person name="Aidinis V."/>
            <person name="Allen J.E."/>
            <person name="Ambesi-Impiombato A."/>
            <person name="Apweiler R."/>
            <person name="Aturaliya R.N."/>
            <person name="Bailey T.L."/>
            <person name="Bansal M."/>
            <person name="Baxter L."/>
            <person name="Beisel K.W."/>
            <person name="Bersano T."/>
            <person name="Bono H."/>
            <person name="Chalk A.M."/>
            <person name="Chiu K.P."/>
            <person name="Choudhary V."/>
            <person name="Christoffels A."/>
            <person name="Clutterbuck D.R."/>
            <person name="Crowe M.L."/>
            <person name="Dalla E."/>
            <person name="Dalrymple B.P."/>
            <person name="de Bono B."/>
            <person name="Della Gatta G."/>
            <person name="di Bernardo D."/>
            <person name="Down T."/>
            <person name="Engstrom P."/>
            <person name="Fagiolini M."/>
            <person name="Faulkner G."/>
            <person name="Fletcher C.F."/>
            <person name="Fukushima T."/>
            <person name="Furuno M."/>
            <person name="Futaki S."/>
            <person name="Gariboldi M."/>
            <person name="Georgii-Hemming P."/>
            <person name="Gingeras T.R."/>
            <person name="Gojobori T."/>
            <person name="Green R.E."/>
            <person name="Gustincich S."/>
            <person name="Harbers M."/>
            <person name="Hayashi Y."/>
            <person name="Hensch T.K."/>
            <person name="Hirokawa N."/>
            <person name="Hill D."/>
            <person name="Huminiecki L."/>
            <person name="Iacono M."/>
            <person name="Ikeo K."/>
            <person name="Iwama A."/>
            <person name="Ishikawa T."/>
            <person name="Jakt M."/>
            <person name="Kanapin A."/>
            <person name="Katoh M."/>
            <person name="Kawasawa Y."/>
            <person name="Kelso J."/>
            <person name="Kitamura H."/>
            <person name="Kitano H."/>
            <person name="Kollias G."/>
            <person name="Krishnan S.P."/>
            <person name="Kruger A."/>
            <person name="Kummerfeld S.K."/>
            <person name="Kurochkin I.V."/>
            <person name="Lareau L.F."/>
            <person name="Lazarevic D."/>
            <person name="Lipovich L."/>
            <person name="Liu J."/>
            <person name="Liuni S."/>
            <person name="McWilliam S."/>
            <person name="Madan Babu M."/>
            <person name="Madera M."/>
            <person name="Marchionni L."/>
            <person name="Matsuda H."/>
            <person name="Matsuzawa S."/>
            <person name="Miki H."/>
            <person name="Mignone F."/>
            <person name="Miyake S."/>
            <person name="Morris K."/>
            <person name="Mottagui-Tabar S."/>
            <person name="Mulder N."/>
            <person name="Nakano N."/>
            <person name="Nakauchi H."/>
            <person name="Ng P."/>
            <person name="Nilsson R."/>
            <person name="Nishiguchi S."/>
            <person name="Nishikawa S."/>
            <person name="Nori F."/>
            <person name="Ohara O."/>
            <person name="Okazaki Y."/>
            <person name="Orlando V."/>
            <person name="Pang K.C."/>
            <person name="Pavan W.J."/>
            <person name="Pavesi G."/>
            <person name="Pesole G."/>
            <person name="Petrovsky N."/>
            <person name="Piazza S."/>
            <person name="Reed J."/>
            <person name="Reid J.F."/>
            <person name="Ring B.Z."/>
            <person name="Ringwald M."/>
            <person name="Rost B."/>
            <person name="Ruan Y."/>
            <person name="Salzberg S.L."/>
            <person name="Sandelin A."/>
            <person name="Schneider C."/>
            <person name="Schoenbach C."/>
            <person name="Sekiguchi K."/>
            <person name="Semple C.A."/>
            <person name="Seno S."/>
            <person name="Sessa L."/>
            <person name="Sheng Y."/>
            <person name="Shibata Y."/>
            <person name="Shimada H."/>
            <person name="Shimada K."/>
            <person name="Silva D."/>
            <person name="Sinclair B."/>
            <person name="Sperling S."/>
            <person name="Stupka E."/>
            <person name="Sugiura K."/>
            <person name="Sultana R."/>
            <person name="Takenaka Y."/>
            <person name="Taki K."/>
            <person name="Tammoja K."/>
            <person name="Tan S.L."/>
            <person name="Tang S."/>
            <person name="Taylor M.S."/>
            <person name="Tegner J."/>
            <person name="Teichmann S.A."/>
            <person name="Ueda H.R."/>
            <person name="van Nimwegen E."/>
            <person name="Verardo R."/>
            <person name="Wei C.L."/>
            <person name="Yagi K."/>
            <person name="Yamanishi H."/>
            <person name="Zabarovsky E."/>
            <person name="Zhu S."/>
            <person name="Zimmer A."/>
            <person name="Hide W."/>
            <person name="Bult C."/>
            <person name="Grimmond S.M."/>
            <person name="Teasdale R.D."/>
            <person name="Liu E.T."/>
            <person name="Brusic V."/>
            <person name="Quackenbush J."/>
            <person name="Wahlestedt C."/>
            <person name="Mattick J.S."/>
            <person name="Hume D.A."/>
            <person name="Kai C."/>
            <person name="Sasaki D."/>
            <person name="Tomaru Y."/>
            <person name="Fukuda S."/>
            <person name="Kanamori-Katayama M."/>
            <person name="Suzuki M."/>
            <person name="Aoki J."/>
            <person name="Arakawa T."/>
            <person name="Iida J."/>
            <person name="Imamura K."/>
            <person name="Itoh M."/>
            <person name="Kato T."/>
            <person name="Kawaji H."/>
            <person name="Kawagashira N."/>
            <person name="Kawashima T."/>
            <person name="Kojima M."/>
            <person name="Kondo S."/>
            <person name="Konno H."/>
            <person name="Nakano K."/>
            <person name="Ninomiya N."/>
            <person name="Nishio T."/>
            <person name="Okada M."/>
            <person name="Plessy C."/>
            <person name="Shibata K."/>
            <person name="Shiraki T."/>
            <person name="Suzuki S."/>
            <person name="Tagami M."/>
            <person name="Waki K."/>
            <person name="Watahiki A."/>
            <person name="Okamura-Oho Y."/>
            <person name="Suzuki H."/>
            <person name="Kawai J."/>
            <person name="Hayashizaki Y."/>
        </authorList>
    </citation>
    <scope>NUCLEOTIDE SEQUENCE [LARGE SCALE MRNA] (ISOFORMS 1 AND 2)</scope>
    <source>
        <strain>C57BL/6J</strain>
        <tissue>Cerebellum</tissue>
        <tissue>Embryonic heart</tissue>
        <tissue>Kidney</tissue>
    </source>
</reference>
<reference key="2">
    <citation type="journal article" date="2009" name="PLoS Biol.">
        <title>Lineage-specific biology revealed by a finished genome assembly of the mouse.</title>
        <authorList>
            <person name="Church D.M."/>
            <person name="Goodstadt L."/>
            <person name="Hillier L.W."/>
            <person name="Zody M.C."/>
            <person name="Goldstein S."/>
            <person name="She X."/>
            <person name="Bult C.J."/>
            <person name="Agarwala R."/>
            <person name="Cherry J.L."/>
            <person name="DiCuccio M."/>
            <person name="Hlavina W."/>
            <person name="Kapustin Y."/>
            <person name="Meric P."/>
            <person name="Maglott D."/>
            <person name="Birtle Z."/>
            <person name="Marques A.C."/>
            <person name="Graves T."/>
            <person name="Zhou S."/>
            <person name="Teague B."/>
            <person name="Potamousis K."/>
            <person name="Churas C."/>
            <person name="Place M."/>
            <person name="Herschleb J."/>
            <person name="Runnheim R."/>
            <person name="Forrest D."/>
            <person name="Amos-Landgraf J."/>
            <person name="Schwartz D.C."/>
            <person name="Cheng Z."/>
            <person name="Lindblad-Toh K."/>
            <person name="Eichler E.E."/>
            <person name="Ponting C.P."/>
        </authorList>
    </citation>
    <scope>NUCLEOTIDE SEQUENCE [LARGE SCALE GENOMIC DNA]</scope>
    <source>
        <strain>C57BL/6J</strain>
    </source>
</reference>
<reference key="3">
    <citation type="journal article" date="2004" name="Genome Res.">
        <title>The status, quality, and expansion of the NIH full-length cDNA project: the Mammalian Gene Collection (MGC).</title>
        <authorList>
            <consortium name="The MGC Project Team"/>
        </authorList>
    </citation>
    <scope>NUCLEOTIDE SEQUENCE [LARGE SCALE MRNA] (ISOFORM 1)</scope>
    <source>
        <strain>FVB/N-3</strain>
        <tissue>Mammary tumor</tissue>
    </source>
</reference>
<reference key="4">
    <citation type="journal article" date="2010" name="Cell">
        <title>A tissue-specific atlas of mouse protein phosphorylation and expression.</title>
        <authorList>
            <person name="Huttlin E.L."/>
            <person name="Jedrychowski M.P."/>
            <person name="Elias J.E."/>
            <person name="Goswami T."/>
            <person name="Rad R."/>
            <person name="Beausoleil S.A."/>
            <person name="Villen J."/>
            <person name="Haas W."/>
            <person name="Sowa M.E."/>
            <person name="Gygi S.P."/>
        </authorList>
    </citation>
    <scope>IDENTIFICATION BY MASS SPECTROMETRY [LARGE SCALE ANALYSIS]</scope>
    <source>
        <tissue>Brain</tissue>
        <tissue>Brown adipose tissue</tissue>
        <tissue>Heart</tissue>
        <tissue>Kidney</tissue>
        <tissue>Liver</tissue>
        <tissue>Lung</tissue>
        <tissue>Pancreas</tissue>
        <tissue>Spleen</tissue>
        <tissue>Testis</tissue>
    </source>
</reference>
<protein>
    <recommendedName>
        <fullName evidence="2">Dehydrogenase/reductase SDR family member 7B</fullName>
        <ecNumber evidence="7">1.1.-.-</ecNumber>
    </recommendedName>
    <alternativeName>
        <fullName evidence="2">Short-chain dehydrogenase/reductase family 32C member 1</fullName>
        <shortName evidence="2">Protein SDR32C1</shortName>
    </alternativeName>
</protein>
<organism>
    <name type="scientific">Mus musculus</name>
    <name type="common">Mouse</name>
    <dbReference type="NCBI Taxonomy" id="10090"/>
    <lineage>
        <taxon>Eukaryota</taxon>
        <taxon>Metazoa</taxon>
        <taxon>Chordata</taxon>
        <taxon>Craniata</taxon>
        <taxon>Vertebrata</taxon>
        <taxon>Euteleostomi</taxon>
        <taxon>Mammalia</taxon>
        <taxon>Eutheria</taxon>
        <taxon>Euarchontoglires</taxon>
        <taxon>Glires</taxon>
        <taxon>Rodentia</taxon>
        <taxon>Myomorpha</taxon>
        <taxon>Muroidea</taxon>
        <taxon>Muridae</taxon>
        <taxon>Murinae</taxon>
        <taxon>Mus</taxon>
        <taxon>Mus</taxon>
    </lineage>
</organism>
<feature type="chain" id="PRO_0000312106" description="Dehydrogenase/reductase SDR family member 7B">
    <location>
        <begin position="1"/>
        <end position="323"/>
    </location>
</feature>
<feature type="topological domain" description="Cytoplasmic" evidence="4">
    <location>
        <begin position="1"/>
        <end position="17"/>
    </location>
</feature>
<feature type="transmembrane region" description="Helical; Signal-anchor for type II membrane protein" evidence="4">
    <location>
        <begin position="18"/>
        <end position="38"/>
    </location>
</feature>
<feature type="topological domain" description="Lumenal" evidence="4">
    <location>
        <begin position="39"/>
        <end position="323"/>
    </location>
</feature>
<feature type="active site" description="Proton acceptor" evidence="5">
    <location>
        <position position="205"/>
    </location>
</feature>
<feature type="binding site" evidence="3">
    <location>
        <position position="62"/>
    </location>
    <ligand>
        <name>NAD(+)</name>
        <dbReference type="ChEBI" id="CHEBI:57540"/>
    </ligand>
</feature>
<feature type="binding site" evidence="3">
    <location>
        <position position="64"/>
    </location>
    <ligand>
        <name>NAD(+)</name>
        <dbReference type="ChEBI" id="CHEBI:57540"/>
    </ligand>
</feature>
<feature type="binding site" evidence="3">
    <location>
        <position position="192"/>
    </location>
    <ligand>
        <name>substrate</name>
    </ligand>
</feature>
<feature type="binding site" evidence="3">
    <location>
        <position position="205"/>
    </location>
    <ligand>
        <name>NAD(+)</name>
        <dbReference type="ChEBI" id="CHEBI:57540"/>
    </ligand>
</feature>
<feature type="binding site" evidence="3">
    <location>
        <position position="209"/>
    </location>
    <ligand>
        <name>NAD(+)</name>
        <dbReference type="ChEBI" id="CHEBI:57540"/>
    </ligand>
</feature>
<feature type="binding site" evidence="3">
    <location>
        <position position="240"/>
    </location>
    <ligand>
        <name>NAD(+)</name>
        <dbReference type="ChEBI" id="CHEBI:57540"/>
    </ligand>
</feature>
<feature type="splice variant" id="VSP_029698" description="In isoform 2." evidence="6">
    <location>
        <begin position="1"/>
        <end position="9"/>
    </location>
</feature>
<comment type="function">
    <text evidence="7">Putative oxidoreductase.</text>
</comment>
<comment type="subcellular location">
    <subcellularLocation>
        <location evidence="1">Endoplasmic reticulum membrane</location>
        <topology evidence="1">Single-pass type II membrane protein</topology>
    </subcellularLocation>
</comment>
<comment type="alternative products">
    <event type="alternative splicing"/>
    <isoform>
        <id>Q99J47-1</id>
        <name>1</name>
        <sequence type="displayed"/>
    </isoform>
    <isoform>
        <id>Q99J47-2</id>
        <name>2</name>
        <sequence type="described" ref="VSP_029698"/>
    </isoform>
</comment>
<comment type="similarity">
    <text evidence="7">Belongs to the short-chain dehydrogenases/reductases (SDR) family.</text>
</comment>
<comment type="sequence caution" evidence="7">
    <conflict type="erroneous initiation">
        <sequence resource="EMBL-CDS" id="CAI35261"/>
    </conflict>
</comment>
<gene>
    <name evidence="8" type="primary">Dhrs7b</name>
    <name evidence="2" type="synonym">Sdr32c1</name>
</gene>
<dbReference type="EC" id="1.1.-.-" evidence="7"/>
<dbReference type="EMBL" id="AK052209">
    <property type="protein sequence ID" value="BAC34887.1"/>
    <property type="molecule type" value="mRNA"/>
</dbReference>
<dbReference type="EMBL" id="AK139084">
    <property type="protein sequence ID" value="BAE23884.1"/>
    <property type="molecule type" value="mRNA"/>
</dbReference>
<dbReference type="EMBL" id="AK144057">
    <property type="protein sequence ID" value="BAE25674.1"/>
    <property type="molecule type" value="mRNA"/>
</dbReference>
<dbReference type="EMBL" id="AL596215">
    <property type="protein sequence ID" value="CAI35261.1"/>
    <property type="status" value="ALT_INIT"/>
    <property type="molecule type" value="Genomic_DNA"/>
</dbReference>
<dbReference type="EMBL" id="BC003479">
    <property type="protein sequence ID" value="AAH03479.1"/>
    <property type="molecule type" value="mRNA"/>
</dbReference>
<dbReference type="CCDS" id="CCDS24800.1">
    <molecule id="Q99J47-1"/>
</dbReference>
<dbReference type="RefSeq" id="NP_001165583.1">
    <molecule id="Q99J47-2"/>
    <property type="nucleotide sequence ID" value="NM_001172112.1"/>
</dbReference>
<dbReference type="RefSeq" id="NP_663403.1">
    <molecule id="Q99J47-1"/>
    <property type="nucleotide sequence ID" value="NM_145428.2"/>
</dbReference>
<dbReference type="SMR" id="Q99J47"/>
<dbReference type="BioGRID" id="229794">
    <property type="interactions" value="9"/>
</dbReference>
<dbReference type="FunCoup" id="Q99J47">
    <property type="interactions" value="192"/>
</dbReference>
<dbReference type="STRING" id="10090.ENSMUSP00000044924"/>
<dbReference type="iPTMnet" id="Q99J47"/>
<dbReference type="PhosphoSitePlus" id="Q99J47"/>
<dbReference type="SwissPalm" id="Q99J47"/>
<dbReference type="jPOST" id="Q99J47"/>
<dbReference type="PaxDb" id="10090-ENSMUSP00000044924"/>
<dbReference type="ProteomicsDB" id="277500">
    <molecule id="Q99J47-1"/>
</dbReference>
<dbReference type="ProteomicsDB" id="277501">
    <molecule id="Q99J47-2"/>
</dbReference>
<dbReference type="Pumba" id="Q99J47"/>
<dbReference type="Antibodypedia" id="2324">
    <property type="antibodies" value="133 antibodies from 17 providers"/>
</dbReference>
<dbReference type="DNASU" id="216820"/>
<dbReference type="Ensembl" id="ENSMUST00000042281.14">
    <molecule id="Q99J47-1"/>
    <property type="protein sequence ID" value="ENSMUSP00000044924.8"/>
    <property type="gene ID" value="ENSMUSG00000042569.14"/>
</dbReference>
<dbReference type="GeneID" id="216820"/>
<dbReference type="KEGG" id="mmu:216820"/>
<dbReference type="UCSC" id="uc007jgq.2">
    <molecule id="Q99J47-1"/>
    <property type="organism name" value="mouse"/>
</dbReference>
<dbReference type="AGR" id="MGI:2384931"/>
<dbReference type="CTD" id="25979"/>
<dbReference type="MGI" id="MGI:2384931">
    <property type="gene designation" value="Dhrs7b"/>
</dbReference>
<dbReference type="VEuPathDB" id="HostDB:ENSMUSG00000042569"/>
<dbReference type="eggNOG" id="KOG1205">
    <property type="taxonomic scope" value="Eukaryota"/>
</dbReference>
<dbReference type="GeneTree" id="ENSGT00940000158171"/>
<dbReference type="InParanoid" id="Q99J47"/>
<dbReference type="OMA" id="YFWIMAK"/>
<dbReference type="OrthoDB" id="5307821at2759"/>
<dbReference type="PhylomeDB" id="Q99J47"/>
<dbReference type="TreeFam" id="TF313474"/>
<dbReference type="Reactome" id="R-MMU-75896">
    <property type="pathway name" value="Plasmalogen biosynthesis"/>
</dbReference>
<dbReference type="BioGRID-ORCS" id="216820">
    <property type="hits" value="5 hits in 77 CRISPR screens"/>
</dbReference>
<dbReference type="CD-CODE" id="CE726F99">
    <property type="entry name" value="Postsynaptic density"/>
</dbReference>
<dbReference type="ChiTaRS" id="Dhrs7b">
    <property type="organism name" value="mouse"/>
</dbReference>
<dbReference type="PRO" id="PR:Q99J47"/>
<dbReference type="Proteomes" id="UP000000589">
    <property type="component" value="Chromosome 11"/>
</dbReference>
<dbReference type="RNAct" id="Q99J47">
    <property type="molecule type" value="protein"/>
</dbReference>
<dbReference type="Bgee" id="ENSMUSG00000042569">
    <property type="expression patterns" value="Expressed in ileal epithelium and 243 other cell types or tissues"/>
</dbReference>
<dbReference type="ExpressionAtlas" id="Q99J47">
    <property type="expression patterns" value="baseline and differential"/>
</dbReference>
<dbReference type="GO" id="GO:0005789">
    <property type="term" value="C:endoplasmic reticulum membrane"/>
    <property type="evidence" value="ECO:0007669"/>
    <property type="project" value="UniProtKB-SubCell"/>
</dbReference>
<dbReference type="GO" id="GO:0016020">
    <property type="term" value="C:membrane"/>
    <property type="evidence" value="ECO:0000314"/>
    <property type="project" value="MGI"/>
</dbReference>
<dbReference type="GO" id="GO:0005634">
    <property type="term" value="C:nucleus"/>
    <property type="evidence" value="ECO:0000314"/>
    <property type="project" value="MGI"/>
</dbReference>
<dbReference type="GO" id="GO:0005777">
    <property type="term" value="C:peroxisome"/>
    <property type="evidence" value="ECO:0000314"/>
    <property type="project" value="MGI"/>
</dbReference>
<dbReference type="GO" id="GO:0005667">
    <property type="term" value="C:transcription regulator complex"/>
    <property type="evidence" value="ECO:0000353"/>
    <property type="project" value="MGI"/>
</dbReference>
<dbReference type="GO" id="GO:0000140">
    <property type="term" value="F:acylglycerone-phosphate reductase (NADP+) activity"/>
    <property type="evidence" value="ECO:0000304"/>
    <property type="project" value="MGI"/>
</dbReference>
<dbReference type="GO" id="GO:0140297">
    <property type="term" value="F:DNA-binding transcription factor binding"/>
    <property type="evidence" value="ECO:0000353"/>
    <property type="project" value="MGI"/>
</dbReference>
<dbReference type="GO" id="GO:0003714">
    <property type="term" value="F:transcription corepressor activity"/>
    <property type="evidence" value="ECO:0000314"/>
    <property type="project" value="MGI"/>
</dbReference>
<dbReference type="GO" id="GO:0060612">
    <property type="term" value="P:adipose tissue development"/>
    <property type="evidence" value="ECO:0000315"/>
    <property type="project" value="MGI"/>
</dbReference>
<dbReference type="GO" id="GO:0050873">
    <property type="term" value="P:brown fat cell differentiation"/>
    <property type="evidence" value="ECO:0000314"/>
    <property type="project" value="MGI"/>
</dbReference>
<dbReference type="GO" id="GO:0008611">
    <property type="term" value="P:ether lipid biosynthetic process"/>
    <property type="evidence" value="ECO:0000315"/>
    <property type="project" value="MGI"/>
</dbReference>
<dbReference type="GO" id="GO:0006954">
    <property type="term" value="P:inflammatory response"/>
    <property type="evidence" value="ECO:0000315"/>
    <property type="project" value="MGI"/>
</dbReference>
<dbReference type="GO" id="GO:0030223">
    <property type="term" value="P:neutrophil differentiation"/>
    <property type="evidence" value="ECO:0000315"/>
    <property type="project" value="MGI"/>
</dbReference>
<dbReference type="GO" id="GO:0006656">
    <property type="term" value="P:phosphatidylcholine biosynthetic process"/>
    <property type="evidence" value="ECO:0000315"/>
    <property type="project" value="MGI"/>
</dbReference>
<dbReference type="GO" id="GO:0120161">
    <property type="term" value="P:regulation of cold-induced thermogenesis"/>
    <property type="evidence" value="ECO:0000315"/>
    <property type="project" value="MGI"/>
</dbReference>
<dbReference type="GO" id="GO:0006355">
    <property type="term" value="P:regulation of DNA-templated transcription"/>
    <property type="evidence" value="ECO:0000314"/>
    <property type="project" value="MGI"/>
</dbReference>
<dbReference type="GO" id="GO:0010468">
    <property type="term" value="P:regulation of gene expression"/>
    <property type="evidence" value="ECO:0000315"/>
    <property type="project" value="MGI"/>
</dbReference>
<dbReference type="CDD" id="cd05332">
    <property type="entry name" value="11beta-HSD1_like_SDR_c"/>
    <property type="match status" value="1"/>
</dbReference>
<dbReference type="FunFam" id="3.40.50.720:FF:000122">
    <property type="entry name" value="Dehydrogenase/reductase SDR family member 7B"/>
    <property type="match status" value="1"/>
</dbReference>
<dbReference type="Gene3D" id="3.40.50.720">
    <property type="entry name" value="NAD(P)-binding Rossmann-like Domain"/>
    <property type="match status" value="1"/>
</dbReference>
<dbReference type="InterPro" id="IPR036291">
    <property type="entry name" value="NAD(P)-bd_dom_sf"/>
</dbReference>
<dbReference type="InterPro" id="IPR020904">
    <property type="entry name" value="Sc_DH/Rdtase_CS"/>
</dbReference>
<dbReference type="InterPro" id="IPR002347">
    <property type="entry name" value="SDR_fam"/>
</dbReference>
<dbReference type="NCBIfam" id="NF004825">
    <property type="entry name" value="PRK06181.1"/>
    <property type="match status" value="1"/>
</dbReference>
<dbReference type="PANTHER" id="PTHR44196">
    <property type="entry name" value="DEHYDROGENASE/REDUCTASE SDR FAMILY MEMBER 7B"/>
    <property type="match status" value="1"/>
</dbReference>
<dbReference type="PANTHER" id="PTHR44196:SF1">
    <property type="entry name" value="DEHYDROGENASE_REDUCTASE SDR FAMILY MEMBER 7B"/>
    <property type="match status" value="1"/>
</dbReference>
<dbReference type="Pfam" id="PF00106">
    <property type="entry name" value="adh_short"/>
    <property type="match status" value="1"/>
</dbReference>
<dbReference type="PIRSF" id="PIRSF000126">
    <property type="entry name" value="11-beta-HSD1"/>
    <property type="match status" value="1"/>
</dbReference>
<dbReference type="PRINTS" id="PR00081">
    <property type="entry name" value="GDHRDH"/>
</dbReference>
<dbReference type="PRINTS" id="PR00080">
    <property type="entry name" value="SDRFAMILY"/>
</dbReference>
<dbReference type="SUPFAM" id="SSF51735">
    <property type="entry name" value="NAD(P)-binding Rossmann-fold domains"/>
    <property type="match status" value="1"/>
</dbReference>
<dbReference type="PROSITE" id="PS00061">
    <property type="entry name" value="ADH_SHORT"/>
    <property type="match status" value="1"/>
</dbReference>
<keyword id="KW-0025">Alternative splicing</keyword>
<keyword id="KW-0256">Endoplasmic reticulum</keyword>
<keyword id="KW-0472">Membrane</keyword>
<keyword id="KW-0520">NAD</keyword>
<keyword id="KW-0521">NADP</keyword>
<keyword id="KW-0560">Oxidoreductase</keyword>
<keyword id="KW-1185">Reference proteome</keyword>
<keyword id="KW-0735">Signal-anchor</keyword>
<keyword id="KW-0812">Transmembrane</keyword>
<keyword id="KW-1133">Transmembrane helix</keyword>
<evidence type="ECO:0000250" key="1">
    <source>
        <dbReference type="UniProtKB" id="Q5RJY4"/>
    </source>
</evidence>
<evidence type="ECO:0000250" key="2">
    <source>
        <dbReference type="UniProtKB" id="Q6IAN0"/>
    </source>
</evidence>
<evidence type="ECO:0000250" key="3">
    <source>
        <dbReference type="UniProtKB" id="Q99714"/>
    </source>
</evidence>
<evidence type="ECO:0000255" key="4"/>
<evidence type="ECO:0000255" key="5">
    <source>
        <dbReference type="PROSITE-ProRule" id="PRU10001"/>
    </source>
</evidence>
<evidence type="ECO:0000303" key="6">
    <source>
    </source>
</evidence>
<evidence type="ECO:0000305" key="7"/>
<evidence type="ECO:0000312" key="8">
    <source>
        <dbReference type="MGI" id="MGI:2384931"/>
    </source>
</evidence>
<accession>Q99J47</accession>
<accession>Q3UNS3</accession>
<accession>Q5NCT5</accession>
<sequence length="323" mass="34987">MISPSFRKGMLKERVMDLASQTTILPLLFGCLGIFSLFRLLQRIRSKAYLRNAVVVVTGATSGLGRECAKVFHAAGAKLVLCGRNVKALEELSRELAGSSQGQTHQPFVVTFDLADPGTIAAAAAEILQCFGYVDVLINNAGISYRGTISDTIVDVDRKVMEINYFGPVALTKALLPSMVERKQGHIVAISSIQGKISIPFRSAYSASKHATQAFFDCLRAEMEEANIKVTVISPGYIHTNLSVNAVTADGSRYGALDKNTAQGRSAAEVAQDVFDAVGKKKKDVLLTDFVPSMAVYIRTLAPGLFFRIMASRARKERKSKSS</sequence>
<name>DRS7B_MOUSE</name>
<proteinExistence type="evidence at protein level"/>